<name>RLMN_BUCBP</name>
<accession>Q89AK8</accession>
<comment type="function">
    <text evidence="1">Specifically methylates position 2 of adenine 2503 in 23S rRNA and position 2 of adenine 37 in tRNAs. m2A2503 modification seems to play a crucial role in the proofreading step occurring at the peptidyl transferase center and thus would serve to optimize ribosomal fidelity.</text>
</comment>
<comment type="catalytic activity">
    <reaction evidence="1">
        <text>adenosine(2503) in 23S rRNA + 2 reduced [2Fe-2S]-[ferredoxin] + 2 S-adenosyl-L-methionine = 2-methyladenosine(2503) in 23S rRNA + 5'-deoxyadenosine + L-methionine + 2 oxidized [2Fe-2S]-[ferredoxin] + S-adenosyl-L-homocysteine</text>
        <dbReference type="Rhea" id="RHEA:42916"/>
        <dbReference type="Rhea" id="RHEA-COMP:10000"/>
        <dbReference type="Rhea" id="RHEA-COMP:10001"/>
        <dbReference type="Rhea" id="RHEA-COMP:10152"/>
        <dbReference type="Rhea" id="RHEA-COMP:10282"/>
        <dbReference type="ChEBI" id="CHEBI:17319"/>
        <dbReference type="ChEBI" id="CHEBI:33737"/>
        <dbReference type="ChEBI" id="CHEBI:33738"/>
        <dbReference type="ChEBI" id="CHEBI:57844"/>
        <dbReference type="ChEBI" id="CHEBI:57856"/>
        <dbReference type="ChEBI" id="CHEBI:59789"/>
        <dbReference type="ChEBI" id="CHEBI:74411"/>
        <dbReference type="ChEBI" id="CHEBI:74497"/>
        <dbReference type="EC" id="2.1.1.192"/>
    </reaction>
</comment>
<comment type="catalytic activity">
    <reaction evidence="1">
        <text>adenosine(37) in tRNA + 2 reduced [2Fe-2S]-[ferredoxin] + 2 S-adenosyl-L-methionine = 2-methyladenosine(37) in tRNA + 5'-deoxyadenosine + L-methionine + 2 oxidized [2Fe-2S]-[ferredoxin] + S-adenosyl-L-homocysteine</text>
        <dbReference type="Rhea" id="RHEA:43332"/>
        <dbReference type="Rhea" id="RHEA-COMP:10000"/>
        <dbReference type="Rhea" id="RHEA-COMP:10001"/>
        <dbReference type="Rhea" id="RHEA-COMP:10162"/>
        <dbReference type="Rhea" id="RHEA-COMP:10485"/>
        <dbReference type="ChEBI" id="CHEBI:17319"/>
        <dbReference type="ChEBI" id="CHEBI:33737"/>
        <dbReference type="ChEBI" id="CHEBI:33738"/>
        <dbReference type="ChEBI" id="CHEBI:57844"/>
        <dbReference type="ChEBI" id="CHEBI:57856"/>
        <dbReference type="ChEBI" id="CHEBI:59789"/>
        <dbReference type="ChEBI" id="CHEBI:74411"/>
        <dbReference type="ChEBI" id="CHEBI:74497"/>
        <dbReference type="EC" id="2.1.1.192"/>
    </reaction>
</comment>
<comment type="cofactor">
    <cofactor evidence="1">
        <name>[4Fe-4S] cluster</name>
        <dbReference type="ChEBI" id="CHEBI:49883"/>
    </cofactor>
    <text evidence="1">Binds 1 [4Fe-4S] cluster. The cluster is coordinated with 3 cysteines and an exchangeable S-adenosyl-L-methionine.</text>
</comment>
<comment type="subcellular location">
    <subcellularLocation>
        <location evidence="1">Cytoplasm</location>
    </subcellularLocation>
</comment>
<comment type="miscellaneous">
    <text evidence="1">Reaction proceeds by a ping-pong mechanism involving intermediate methylation of a conserved cysteine residue.</text>
</comment>
<comment type="similarity">
    <text evidence="1">Belongs to the radical SAM superfamily. RlmN family.</text>
</comment>
<gene>
    <name evidence="1" type="primary">rlmN</name>
    <name type="ordered locus">bbp_265</name>
</gene>
<organism>
    <name type="scientific">Buchnera aphidicola subsp. Baizongia pistaciae (strain Bp)</name>
    <dbReference type="NCBI Taxonomy" id="224915"/>
    <lineage>
        <taxon>Bacteria</taxon>
        <taxon>Pseudomonadati</taxon>
        <taxon>Pseudomonadota</taxon>
        <taxon>Gammaproteobacteria</taxon>
        <taxon>Enterobacterales</taxon>
        <taxon>Erwiniaceae</taxon>
        <taxon>Buchnera</taxon>
    </lineage>
</organism>
<sequence length="373" mass="42425">MNMINYECKMQKIKLKTNLLNFDLQSMKKFFCSIGELEFRAQQVMKWIYQHYCDDFNKMTNISLQLRKKLSTLCCITPPKFLNHKVSVDGTMKWSVVIGNQCIETVCIPKNQRTTLCISSQLGCSLACSFCLTGQQGFNKNLNVSEIIGQVWYIQKLIYFSKINITNKITNVVLMGMGEPLLNLSNVVHALRIMLDEFGLNMSKNHITLSTAGIVPALKKLHTMIDVSLAVSLHASNNTIRNQLMPINKKYNIESVLCAIKKYLYYSNANKKRVTIEYVMLSGINDAAYHAEELFNLLKSIPHKINLIPWNHFSGSNYICSNDITINNFANILIKKGCIVTIRKIRGYDINAACGQLSGIVFDRKFNKINCIS</sequence>
<keyword id="KW-0004">4Fe-4S</keyword>
<keyword id="KW-0963">Cytoplasm</keyword>
<keyword id="KW-1015">Disulfide bond</keyword>
<keyword id="KW-0408">Iron</keyword>
<keyword id="KW-0411">Iron-sulfur</keyword>
<keyword id="KW-0479">Metal-binding</keyword>
<keyword id="KW-0489">Methyltransferase</keyword>
<keyword id="KW-1185">Reference proteome</keyword>
<keyword id="KW-0698">rRNA processing</keyword>
<keyword id="KW-0949">S-adenosyl-L-methionine</keyword>
<keyword id="KW-0808">Transferase</keyword>
<keyword id="KW-0819">tRNA processing</keyword>
<feature type="chain" id="PRO_0000171924" description="Dual-specificity RNA methyltransferase RlmN">
    <location>
        <begin position="1"/>
        <end position="373"/>
    </location>
</feature>
<feature type="domain" description="Radical SAM core" evidence="2">
    <location>
        <begin position="110"/>
        <end position="349"/>
    </location>
</feature>
<feature type="active site" description="Proton acceptor" evidence="1">
    <location>
        <position position="104"/>
    </location>
</feature>
<feature type="active site" description="S-methylcysteine intermediate" evidence="1">
    <location>
        <position position="354"/>
    </location>
</feature>
<feature type="binding site" evidence="1">
    <location>
        <position position="124"/>
    </location>
    <ligand>
        <name>[4Fe-4S] cluster</name>
        <dbReference type="ChEBI" id="CHEBI:49883"/>
        <note>4Fe-4S-S-AdoMet</note>
    </ligand>
</feature>
<feature type="binding site" evidence="1">
    <location>
        <position position="128"/>
    </location>
    <ligand>
        <name>[4Fe-4S] cluster</name>
        <dbReference type="ChEBI" id="CHEBI:49883"/>
        <note>4Fe-4S-S-AdoMet</note>
    </ligand>
</feature>
<feature type="binding site" evidence="1">
    <location>
        <position position="131"/>
    </location>
    <ligand>
        <name>[4Fe-4S] cluster</name>
        <dbReference type="ChEBI" id="CHEBI:49883"/>
        <note>4Fe-4S-S-AdoMet</note>
    </ligand>
</feature>
<feature type="binding site" evidence="1">
    <location>
        <begin position="178"/>
        <end position="179"/>
    </location>
    <ligand>
        <name>S-adenosyl-L-methionine</name>
        <dbReference type="ChEBI" id="CHEBI:59789"/>
    </ligand>
</feature>
<feature type="binding site" evidence="1">
    <location>
        <position position="210"/>
    </location>
    <ligand>
        <name>S-adenosyl-L-methionine</name>
        <dbReference type="ChEBI" id="CHEBI:59789"/>
    </ligand>
</feature>
<feature type="binding site" evidence="1">
    <location>
        <begin position="232"/>
        <end position="234"/>
    </location>
    <ligand>
        <name>S-adenosyl-L-methionine</name>
        <dbReference type="ChEBI" id="CHEBI:59789"/>
    </ligand>
</feature>
<feature type="binding site" evidence="1">
    <location>
        <position position="311"/>
    </location>
    <ligand>
        <name>S-adenosyl-L-methionine</name>
        <dbReference type="ChEBI" id="CHEBI:59789"/>
    </ligand>
</feature>
<feature type="disulfide bond" description="(transient)" evidence="1">
    <location>
        <begin position="117"/>
        <end position="354"/>
    </location>
</feature>
<dbReference type="EC" id="2.1.1.192" evidence="1"/>
<dbReference type="EMBL" id="AE016826">
    <property type="protein sequence ID" value="AAO26991.1"/>
    <property type="molecule type" value="Genomic_DNA"/>
</dbReference>
<dbReference type="RefSeq" id="WP_011091392.1">
    <property type="nucleotide sequence ID" value="NC_004545.1"/>
</dbReference>
<dbReference type="SMR" id="Q89AK8"/>
<dbReference type="STRING" id="224915.bbp_265"/>
<dbReference type="KEGG" id="bab:bbp_265"/>
<dbReference type="eggNOG" id="COG0820">
    <property type="taxonomic scope" value="Bacteria"/>
</dbReference>
<dbReference type="HOGENOM" id="CLU_029101_0_0_6"/>
<dbReference type="OrthoDB" id="9793973at2"/>
<dbReference type="Proteomes" id="UP000000601">
    <property type="component" value="Chromosome"/>
</dbReference>
<dbReference type="GO" id="GO:0005737">
    <property type="term" value="C:cytoplasm"/>
    <property type="evidence" value="ECO:0007669"/>
    <property type="project" value="UniProtKB-SubCell"/>
</dbReference>
<dbReference type="GO" id="GO:0051539">
    <property type="term" value="F:4 iron, 4 sulfur cluster binding"/>
    <property type="evidence" value="ECO:0007669"/>
    <property type="project" value="UniProtKB-UniRule"/>
</dbReference>
<dbReference type="GO" id="GO:0046872">
    <property type="term" value="F:metal ion binding"/>
    <property type="evidence" value="ECO:0007669"/>
    <property type="project" value="UniProtKB-KW"/>
</dbReference>
<dbReference type="GO" id="GO:0070040">
    <property type="term" value="F:rRNA (adenine(2503)-C2-)-methyltransferase activity"/>
    <property type="evidence" value="ECO:0007669"/>
    <property type="project" value="UniProtKB-UniRule"/>
</dbReference>
<dbReference type="GO" id="GO:0019843">
    <property type="term" value="F:rRNA binding"/>
    <property type="evidence" value="ECO:0007669"/>
    <property type="project" value="UniProtKB-UniRule"/>
</dbReference>
<dbReference type="GO" id="GO:0002935">
    <property type="term" value="F:tRNA (adenine(37)-C2)-methyltransferase activity"/>
    <property type="evidence" value="ECO:0007669"/>
    <property type="project" value="UniProtKB-UniRule"/>
</dbReference>
<dbReference type="GO" id="GO:0000049">
    <property type="term" value="F:tRNA binding"/>
    <property type="evidence" value="ECO:0007669"/>
    <property type="project" value="UniProtKB-UniRule"/>
</dbReference>
<dbReference type="GO" id="GO:0070475">
    <property type="term" value="P:rRNA base methylation"/>
    <property type="evidence" value="ECO:0007669"/>
    <property type="project" value="UniProtKB-UniRule"/>
</dbReference>
<dbReference type="GO" id="GO:0030488">
    <property type="term" value="P:tRNA methylation"/>
    <property type="evidence" value="ECO:0007669"/>
    <property type="project" value="UniProtKB-UniRule"/>
</dbReference>
<dbReference type="CDD" id="cd01335">
    <property type="entry name" value="Radical_SAM"/>
    <property type="match status" value="1"/>
</dbReference>
<dbReference type="FunFam" id="1.10.150.530:FF:000003">
    <property type="entry name" value="Dual-specificity RNA methyltransferase RlmN"/>
    <property type="match status" value="1"/>
</dbReference>
<dbReference type="FunFam" id="3.20.20.70:FF:000008">
    <property type="entry name" value="Dual-specificity RNA methyltransferase RlmN"/>
    <property type="match status" value="1"/>
</dbReference>
<dbReference type="Gene3D" id="1.10.150.530">
    <property type="match status" value="1"/>
</dbReference>
<dbReference type="Gene3D" id="3.20.20.70">
    <property type="entry name" value="Aldolase class I"/>
    <property type="match status" value="1"/>
</dbReference>
<dbReference type="HAMAP" id="MF_01849">
    <property type="entry name" value="RNA_methyltr_RlmN"/>
    <property type="match status" value="1"/>
</dbReference>
<dbReference type="InterPro" id="IPR013785">
    <property type="entry name" value="Aldolase_TIM"/>
</dbReference>
<dbReference type="InterPro" id="IPR040072">
    <property type="entry name" value="Methyltransferase_A"/>
</dbReference>
<dbReference type="InterPro" id="IPR048641">
    <property type="entry name" value="RlmN_N"/>
</dbReference>
<dbReference type="InterPro" id="IPR027492">
    <property type="entry name" value="RNA_MTrfase_RlmN"/>
</dbReference>
<dbReference type="InterPro" id="IPR004383">
    <property type="entry name" value="rRNA_lsu_MTrfase_RlmN/Cfr"/>
</dbReference>
<dbReference type="InterPro" id="IPR007197">
    <property type="entry name" value="rSAM"/>
</dbReference>
<dbReference type="NCBIfam" id="TIGR00048">
    <property type="entry name" value="rRNA_mod_RlmN"/>
    <property type="match status" value="1"/>
</dbReference>
<dbReference type="PANTHER" id="PTHR30544">
    <property type="entry name" value="23S RRNA METHYLTRANSFERASE"/>
    <property type="match status" value="1"/>
</dbReference>
<dbReference type="PANTHER" id="PTHR30544:SF5">
    <property type="entry name" value="RADICAL SAM CORE DOMAIN-CONTAINING PROTEIN"/>
    <property type="match status" value="1"/>
</dbReference>
<dbReference type="Pfam" id="PF04055">
    <property type="entry name" value="Radical_SAM"/>
    <property type="match status" value="1"/>
</dbReference>
<dbReference type="Pfam" id="PF21016">
    <property type="entry name" value="RlmN_N"/>
    <property type="match status" value="1"/>
</dbReference>
<dbReference type="PIRSF" id="PIRSF006004">
    <property type="entry name" value="CHP00048"/>
    <property type="match status" value="1"/>
</dbReference>
<dbReference type="SFLD" id="SFLDF00275">
    <property type="entry name" value="adenosine_C2_methyltransferase"/>
    <property type="match status" value="1"/>
</dbReference>
<dbReference type="SFLD" id="SFLDS00029">
    <property type="entry name" value="Radical_SAM"/>
    <property type="match status" value="1"/>
</dbReference>
<dbReference type="SUPFAM" id="SSF102114">
    <property type="entry name" value="Radical SAM enzymes"/>
    <property type="match status" value="1"/>
</dbReference>
<dbReference type="PROSITE" id="PS51918">
    <property type="entry name" value="RADICAL_SAM"/>
    <property type="match status" value="1"/>
</dbReference>
<evidence type="ECO:0000255" key="1">
    <source>
        <dbReference type="HAMAP-Rule" id="MF_01849"/>
    </source>
</evidence>
<evidence type="ECO:0000255" key="2">
    <source>
        <dbReference type="PROSITE-ProRule" id="PRU01266"/>
    </source>
</evidence>
<reference key="1">
    <citation type="journal article" date="2003" name="Proc. Natl. Acad. Sci. U.S.A.">
        <title>Reductive genome evolution in Buchnera aphidicola.</title>
        <authorList>
            <person name="van Ham R.C.H.J."/>
            <person name="Kamerbeek J."/>
            <person name="Palacios C."/>
            <person name="Rausell C."/>
            <person name="Abascal F."/>
            <person name="Bastolla U."/>
            <person name="Fernandez J.M."/>
            <person name="Jimenez L."/>
            <person name="Postigo M."/>
            <person name="Silva F.J."/>
            <person name="Tamames J."/>
            <person name="Viguera E."/>
            <person name="Latorre A."/>
            <person name="Valencia A."/>
            <person name="Moran F."/>
            <person name="Moya A."/>
        </authorList>
    </citation>
    <scope>NUCLEOTIDE SEQUENCE [LARGE SCALE GENOMIC DNA]</scope>
    <source>
        <strain>Bp</strain>
    </source>
</reference>
<protein>
    <recommendedName>
        <fullName evidence="1">Dual-specificity RNA methyltransferase RlmN</fullName>
        <ecNumber evidence="1">2.1.1.192</ecNumber>
    </recommendedName>
    <alternativeName>
        <fullName evidence="1">23S rRNA (adenine(2503)-C(2))-methyltransferase</fullName>
    </alternativeName>
    <alternativeName>
        <fullName evidence="1">23S rRNA m2A2503 methyltransferase</fullName>
    </alternativeName>
    <alternativeName>
        <fullName evidence="1">Ribosomal RNA large subunit methyltransferase N</fullName>
    </alternativeName>
    <alternativeName>
        <fullName evidence="1">tRNA (adenine(37)-C(2))-methyltransferase</fullName>
    </alternativeName>
    <alternativeName>
        <fullName evidence="1">tRNA m2A37 methyltransferase</fullName>
    </alternativeName>
</protein>
<proteinExistence type="inferred from homology"/>